<accession>C0MBU0</accession>
<name>RL11_STRE4</name>
<gene>
    <name evidence="1" type="primary">rplK</name>
    <name type="ordered locus">SEQ_1651</name>
</gene>
<dbReference type="EMBL" id="FM204883">
    <property type="protein sequence ID" value="CAW94672.1"/>
    <property type="molecule type" value="Genomic_DNA"/>
</dbReference>
<dbReference type="RefSeq" id="WP_003049875.1">
    <property type="nucleotide sequence ID" value="NC_012471.1"/>
</dbReference>
<dbReference type="SMR" id="C0MBU0"/>
<dbReference type="GeneID" id="83705329"/>
<dbReference type="KEGG" id="seu:SEQ_1651"/>
<dbReference type="HOGENOM" id="CLU_074237_2_1_9"/>
<dbReference type="OrthoDB" id="9802408at2"/>
<dbReference type="Proteomes" id="UP000001365">
    <property type="component" value="Chromosome"/>
</dbReference>
<dbReference type="GO" id="GO:0022625">
    <property type="term" value="C:cytosolic large ribosomal subunit"/>
    <property type="evidence" value="ECO:0007669"/>
    <property type="project" value="TreeGrafter"/>
</dbReference>
<dbReference type="GO" id="GO:0070180">
    <property type="term" value="F:large ribosomal subunit rRNA binding"/>
    <property type="evidence" value="ECO:0007669"/>
    <property type="project" value="UniProtKB-UniRule"/>
</dbReference>
<dbReference type="GO" id="GO:0003735">
    <property type="term" value="F:structural constituent of ribosome"/>
    <property type="evidence" value="ECO:0007669"/>
    <property type="project" value="InterPro"/>
</dbReference>
<dbReference type="GO" id="GO:0006412">
    <property type="term" value="P:translation"/>
    <property type="evidence" value="ECO:0007669"/>
    <property type="project" value="UniProtKB-UniRule"/>
</dbReference>
<dbReference type="CDD" id="cd00349">
    <property type="entry name" value="Ribosomal_L11"/>
    <property type="match status" value="1"/>
</dbReference>
<dbReference type="FunFam" id="1.10.10.250:FF:000001">
    <property type="entry name" value="50S ribosomal protein L11"/>
    <property type="match status" value="1"/>
</dbReference>
<dbReference type="FunFam" id="3.30.1550.10:FF:000001">
    <property type="entry name" value="50S ribosomal protein L11"/>
    <property type="match status" value="1"/>
</dbReference>
<dbReference type="Gene3D" id="1.10.10.250">
    <property type="entry name" value="Ribosomal protein L11, C-terminal domain"/>
    <property type="match status" value="1"/>
</dbReference>
<dbReference type="Gene3D" id="3.30.1550.10">
    <property type="entry name" value="Ribosomal protein L11/L12, N-terminal domain"/>
    <property type="match status" value="1"/>
</dbReference>
<dbReference type="HAMAP" id="MF_00736">
    <property type="entry name" value="Ribosomal_uL11"/>
    <property type="match status" value="1"/>
</dbReference>
<dbReference type="InterPro" id="IPR000911">
    <property type="entry name" value="Ribosomal_uL11"/>
</dbReference>
<dbReference type="InterPro" id="IPR006519">
    <property type="entry name" value="Ribosomal_uL11_bac-typ"/>
</dbReference>
<dbReference type="InterPro" id="IPR020783">
    <property type="entry name" value="Ribosomal_uL11_C"/>
</dbReference>
<dbReference type="InterPro" id="IPR036769">
    <property type="entry name" value="Ribosomal_uL11_C_sf"/>
</dbReference>
<dbReference type="InterPro" id="IPR020785">
    <property type="entry name" value="Ribosomal_uL11_CS"/>
</dbReference>
<dbReference type="InterPro" id="IPR020784">
    <property type="entry name" value="Ribosomal_uL11_N"/>
</dbReference>
<dbReference type="InterPro" id="IPR036796">
    <property type="entry name" value="Ribosomal_uL11_N_sf"/>
</dbReference>
<dbReference type="NCBIfam" id="TIGR01632">
    <property type="entry name" value="L11_bact"/>
    <property type="match status" value="1"/>
</dbReference>
<dbReference type="PANTHER" id="PTHR11661">
    <property type="entry name" value="60S RIBOSOMAL PROTEIN L12"/>
    <property type="match status" value="1"/>
</dbReference>
<dbReference type="PANTHER" id="PTHR11661:SF1">
    <property type="entry name" value="LARGE RIBOSOMAL SUBUNIT PROTEIN UL11M"/>
    <property type="match status" value="1"/>
</dbReference>
<dbReference type="Pfam" id="PF00298">
    <property type="entry name" value="Ribosomal_L11"/>
    <property type="match status" value="1"/>
</dbReference>
<dbReference type="Pfam" id="PF03946">
    <property type="entry name" value="Ribosomal_L11_N"/>
    <property type="match status" value="1"/>
</dbReference>
<dbReference type="SMART" id="SM00649">
    <property type="entry name" value="RL11"/>
    <property type="match status" value="1"/>
</dbReference>
<dbReference type="SUPFAM" id="SSF54747">
    <property type="entry name" value="Ribosomal L11/L12e N-terminal domain"/>
    <property type="match status" value="1"/>
</dbReference>
<dbReference type="SUPFAM" id="SSF46906">
    <property type="entry name" value="Ribosomal protein L11, C-terminal domain"/>
    <property type="match status" value="1"/>
</dbReference>
<dbReference type="PROSITE" id="PS00359">
    <property type="entry name" value="RIBOSOMAL_L11"/>
    <property type="match status" value="1"/>
</dbReference>
<sequence>MAKKVEKLVKLQIPAGKATPAPPVGPALGQAGINIMGFTKEFNARTADQAGMIIPVVISVYEDKSFDFITKTPPAAVLLKKAAGVEKGSGTPNKTKVATVTRAQVQEIAETKMPDLNAANIEAAMRMIEGTARSMGFTVTD</sequence>
<keyword id="KW-0488">Methylation</keyword>
<keyword id="KW-0687">Ribonucleoprotein</keyword>
<keyword id="KW-0689">Ribosomal protein</keyword>
<keyword id="KW-0694">RNA-binding</keyword>
<keyword id="KW-0699">rRNA-binding</keyword>
<protein>
    <recommendedName>
        <fullName evidence="1">Large ribosomal subunit protein uL11</fullName>
    </recommendedName>
    <alternativeName>
        <fullName evidence="2">50S ribosomal protein L11</fullName>
    </alternativeName>
</protein>
<comment type="function">
    <text evidence="1">Forms part of the ribosomal stalk which helps the ribosome interact with GTP-bound translation factors.</text>
</comment>
<comment type="subunit">
    <text evidence="1">Part of the ribosomal stalk of the 50S ribosomal subunit. Interacts with L10 and the large rRNA to form the base of the stalk. L10 forms an elongated spine to which L12 dimers bind in a sequential fashion forming a multimeric L10(L12)X complex.</text>
</comment>
<comment type="PTM">
    <text evidence="1">One or more lysine residues are methylated.</text>
</comment>
<comment type="similarity">
    <text evidence="1">Belongs to the universal ribosomal protein uL11 family.</text>
</comment>
<organism>
    <name type="scientific">Streptococcus equi subsp. equi (strain 4047)</name>
    <dbReference type="NCBI Taxonomy" id="553482"/>
    <lineage>
        <taxon>Bacteria</taxon>
        <taxon>Bacillati</taxon>
        <taxon>Bacillota</taxon>
        <taxon>Bacilli</taxon>
        <taxon>Lactobacillales</taxon>
        <taxon>Streptococcaceae</taxon>
        <taxon>Streptococcus</taxon>
    </lineage>
</organism>
<proteinExistence type="inferred from homology"/>
<evidence type="ECO:0000255" key="1">
    <source>
        <dbReference type="HAMAP-Rule" id="MF_00736"/>
    </source>
</evidence>
<evidence type="ECO:0000305" key="2"/>
<feature type="chain" id="PRO_1000195720" description="Large ribosomal subunit protein uL11">
    <location>
        <begin position="1"/>
        <end position="141"/>
    </location>
</feature>
<reference key="1">
    <citation type="journal article" date="2009" name="PLoS Pathog.">
        <title>Genomic evidence for the evolution of Streptococcus equi: host restriction, increased virulence, and genetic exchange with human pathogens.</title>
        <authorList>
            <person name="Holden M.T.G."/>
            <person name="Heather Z."/>
            <person name="Paillot R."/>
            <person name="Steward K.F."/>
            <person name="Webb K."/>
            <person name="Ainslie F."/>
            <person name="Jourdan T."/>
            <person name="Bason N.C."/>
            <person name="Holroyd N.E."/>
            <person name="Mungall K."/>
            <person name="Quail M.A."/>
            <person name="Sanders M."/>
            <person name="Simmonds M."/>
            <person name="Willey D."/>
            <person name="Brooks K."/>
            <person name="Aanensen D.M."/>
            <person name="Spratt B.G."/>
            <person name="Jolley K.A."/>
            <person name="Maiden M.C.J."/>
            <person name="Kehoe M."/>
            <person name="Chanter N."/>
            <person name="Bentley S.D."/>
            <person name="Robinson C."/>
            <person name="Maskell D.J."/>
            <person name="Parkhill J."/>
            <person name="Waller A.S."/>
        </authorList>
    </citation>
    <scope>NUCLEOTIDE SEQUENCE [LARGE SCALE GENOMIC DNA]</scope>
    <source>
        <strain>4047</strain>
    </source>
</reference>